<name>ORYB_ORYSJ</name>
<sequence>MAARAAAAAFLLLLIVGAATAAPDMSIISYNAEHGARGLEEGPTEAEARAAYDLWLAENGGGSPNALGGEHERRFLVFWDNLKFVDAHNARADERGGFRLGMNRFADLTNEEFRATFLGAKVAERSRAAGERYRHDGVEELPESVDWREKGAVAPVKNQGQCGSCWAFSAVSTVESINQLVTGEMITLSEQELVECSTNGQNSGCNGGLMDDAFDFIIKNGGIDTEDDYPYKAVDGKCDINRENAKVVSIDGFEDVPQNDEKSLQKAVAHQPVSVAIEAGGREFQLYHSGVFSGRCGTSLDHGVVAVGYGTDNGKDYWIVRNSWGPKWGESGYVRMERNINVTTGKCGIAMMASYPTKSGANPPKPSPTPPTPPTPPPPSAPDHVCDDNFSCPAGSTCCCAFGFRNLCLVWGCCPVEGATCCKDHASCCPPDYPVCNTRAGTCSASKNSPLSVKALKRTLAKLNTA</sequence>
<proteinExistence type="evidence at protein level"/>
<gene>
    <name type="ordered locus">Os04g0670200</name>
    <name type="ordered locus">LOC_Os04g57440</name>
    <name type="ORF">H0818H01.14</name>
    <name type="ORF">OSJNBa0043A12.28</name>
</gene>
<comment type="function">
    <text evidence="2">Probable thiol protease.</text>
</comment>
<comment type="tissue specificity">
    <text evidence="12">Expressed only in seeds.</text>
</comment>
<comment type="induction">
    <text evidence="12">By gibberellic acid (GA).</text>
</comment>
<comment type="similarity">
    <text evidence="7 8 9">Belongs to the peptidase C1 family.</text>
</comment>
<comment type="sequence caution" evidence="13">
    <conflict type="frameshift">
        <sequence resource="EMBL-CDS" id="BAA14403"/>
    </conflict>
</comment>
<protein>
    <recommendedName>
        <fullName>Oryzain beta chain</fullName>
        <ecNumber evidence="3">3.4.22.-</ecNumber>
    </recommendedName>
</protein>
<organism>
    <name type="scientific">Oryza sativa subsp. japonica</name>
    <name type="common">Rice</name>
    <dbReference type="NCBI Taxonomy" id="39947"/>
    <lineage>
        <taxon>Eukaryota</taxon>
        <taxon>Viridiplantae</taxon>
        <taxon>Streptophyta</taxon>
        <taxon>Embryophyta</taxon>
        <taxon>Tracheophyta</taxon>
        <taxon>Spermatophyta</taxon>
        <taxon>Magnoliopsida</taxon>
        <taxon>Liliopsida</taxon>
        <taxon>Poales</taxon>
        <taxon>Poaceae</taxon>
        <taxon>BOP clade</taxon>
        <taxon>Oryzoideae</taxon>
        <taxon>Oryzeae</taxon>
        <taxon>Oryzinae</taxon>
        <taxon>Oryza</taxon>
        <taxon>Oryza sativa</taxon>
    </lineage>
</organism>
<accession>P25777</accession>
<accession>B7F253</accession>
<accession>Q0J962</accession>
<accession>Q259Q5</accession>
<accession>Q7XR57</accession>
<accession>Q8S4X9</accession>
<feature type="signal peptide" evidence="5">
    <location>
        <begin position="1"/>
        <end position="21"/>
    </location>
</feature>
<feature type="propeptide" id="PRO_0000026434" description="Activation peptide" evidence="1">
    <location>
        <begin position="22"/>
        <end position="140"/>
    </location>
</feature>
<feature type="chain" id="PRO_0000026435" description="Oryzain beta chain">
    <location>
        <begin position="141"/>
        <end position="361"/>
    </location>
</feature>
<feature type="propeptide" id="PRO_0000046021" description="Removed in mature form" evidence="13">
    <location>
        <begin position="362"/>
        <end position="466"/>
    </location>
</feature>
<feature type="region of interest" description="Disordered" evidence="10">
    <location>
        <begin position="358"/>
        <end position="380"/>
    </location>
</feature>
<feature type="compositionally biased region" description="Pro residues" evidence="10">
    <location>
        <begin position="363"/>
        <end position="380"/>
    </location>
</feature>
<feature type="active site" evidence="7">
    <location>
        <position position="165"/>
    </location>
</feature>
<feature type="active site" evidence="8">
    <location>
        <position position="302"/>
    </location>
</feature>
<feature type="active site" evidence="9">
    <location>
        <position position="322"/>
    </location>
</feature>
<feature type="glycosylation site" description="N-linked (GlcNAc...) asparagine" evidence="6">
    <location>
        <position position="341"/>
    </location>
</feature>
<feature type="glycosylation site" description="N-linked (GlcNAc...) asparagine" evidence="6">
    <location>
        <position position="389"/>
    </location>
</feature>
<feature type="disulfide bond" evidence="4">
    <location>
        <begin position="162"/>
        <end position="205"/>
    </location>
</feature>
<feature type="disulfide bond" evidence="4">
    <location>
        <begin position="196"/>
        <end position="238"/>
    </location>
</feature>
<feature type="disulfide bond" evidence="4">
    <location>
        <begin position="296"/>
        <end position="347"/>
    </location>
</feature>
<feature type="disulfide bond" evidence="11 14">
    <location>
        <begin position="386"/>
        <end position="398"/>
    </location>
</feature>
<feature type="disulfide bond" evidence="11 14">
    <location>
        <begin position="392"/>
        <end position="413"/>
    </location>
</feature>
<feature type="sequence conflict" description="In Ref. 1; BAA14403." evidence="13" ref="1">
    <original>R</original>
    <variation>G</variation>
    <location>
        <position position="95"/>
    </location>
</feature>
<feature type="sequence conflict" description="In Ref. 1; BAA14403." evidence="13" ref="1">
    <original>D</original>
    <variation>A</variation>
    <location>
        <position position="211"/>
    </location>
</feature>
<feature type="strand" evidence="15">
    <location>
        <begin position="386"/>
        <end position="389"/>
    </location>
</feature>
<feature type="strand" evidence="15">
    <location>
        <begin position="394"/>
        <end position="398"/>
    </location>
</feature>
<dbReference type="EC" id="3.4.22.-" evidence="3"/>
<dbReference type="EMBL" id="D90407">
    <property type="protein sequence ID" value="BAA14403.1"/>
    <property type="status" value="ALT_FRAME"/>
    <property type="molecule type" value="mRNA"/>
</dbReference>
<dbReference type="EMBL" id="AL606619">
    <property type="protein sequence ID" value="CAE02823.1"/>
    <property type="molecule type" value="Genomic_DNA"/>
</dbReference>
<dbReference type="EMBL" id="AL732346">
    <property type="protein sequence ID" value="CAJ86092.1"/>
    <property type="molecule type" value="Genomic_DNA"/>
</dbReference>
<dbReference type="EMBL" id="AP008210">
    <property type="protein sequence ID" value="BAF16125.2"/>
    <property type="molecule type" value="Genomic_DNA"/>
</dbReference>
<dbReference type="EMBL" id="AP014960">
    <property type="protein sequence ID" value="BAS91553.1"/>
    <property type="molecule type" value="Genomic_DNA"/>
</dbReference>
<dbReference type="EMBL" id="AK109371">
    <property type="protein sequence ID" value="BAG98700.1"/>
    <property type="molecule type" value="mRNA"/>
</dbReference>
<dbReference type="EMBL" id="AF366556">
    <property type="protein sequence ID" value="AAM00365.1"/>
    <property type="molecule type" value="mRNA"/>
</dbReference>
<dbReference type="PIR" id="JU0389">
    <property type="entry name" value="KHRZOB"/>
</dbReference>
<dbReference type="RefSeq" id="XP_015636103.1">
    <property type="nucleotide sequence ID" value="XM_015780617.1"/>
</dbReference>
<dbReference type="PDB" id="1FWO">
    <property type="method" value="NMR"/>
    <property type="chains" value="A=383-417"/>
</dbReference>
<dbReference type="PDBsum" id="1FWO"/>
<dbReference type="SMR" id="P25777"/>
<dbReference type="FunCoup" id="P25777">
    <property type="interactions" value="526"/>
</dbReference>
<dbReference type="STRING" id="39947.P25777"/>
<dbReference type="MEROPS" id="C01.029"/>
<dbReference type="PaxDb" id="39947-P25777"/>
<dbReference type="EnsemblPlants" id="Os04t0670200-01">
    <property type="protein sequence ID" value="Os04t0670200-01"/>
    <property type="gene ID" value="Os04g0670200"/>
</dbReference>
<dbReference type="Gramene" id="Os04t0670200-01">
    <property type="protein sequence ID" value="Os04t0670200-01"/>
    <property type="gene ID" value="Os04g0670200"/>
</dbReference>
<dbReference type="KEGG" id="dosa:Os04g0670200"/>
<dbReference type="eggNOG" id="KOG1543">
    <property type="taxonomic scope" value="Eukaryota"/>
</dbReference>
<dbReference type="eggNOG" id="KOG4296">
    <property type="taxonomic scope" value="Eukaryota"/>
</dbReference>
<dbReference type="HOGENOM" id="CLU_012184_0_2_1"/>
<dbReference type="InParanoid" id="P25777"/>
<dbReference type="OrthoDB" id="10253408at2759"/>
<dbReference type="EvolutionaryTrace" id="P25777"/>
<dbReference type="Proteomes" id="UP000000763">
    <property type="component" value="Chromosome 4"/>
</dbReference>
<dbReference type="Proteomes" id="UP000059680">
    <property type="component" value="Chromosome 4"/>
</dbReference>
<dbReference type="ExpressionAtlas" id="P25777">
    <property type="expression patterns" value="baseline and differential"/>
</dbReference>
<dbReference type="GO" id="GO:0005615">
    <property type="term" value="C:extracellular space"/>
    <property type="evidence" value="ECO:0000318"/>
    <property type="project" value="GO_Central"/>
</dbReference>
<dbReference type="GO" id="GO:0005764">
    <property type="term" value="C:lysosome"/>
    <property type="evidence" value="ECO:0000318"/>
    <property type="project" value="GO_Central"/>
</dbReference>
<dbReference type="GO" id="GO:0004197">
    <property type="term" value="F:cysteine-type endopeptidase activity"/>
    <property type="evidence" value="ECO:0000318"/>
    <property type="project" value="GO_Central"/>
</dbReference>
<dbReference type="GO" id="GO:0051603">
    <property type="term" value="P:proteolysis involved in protein catabolic process"/>
    <property type="evidence" value="ECO:0000318"/>
    <property type="project" value="GO_Central"/>
</dbReference>
<dbReference type="CDD" id="cd02248">
    <property type="entry name" value="Peptidase_C1A"/>
    <property type="match status" value="1"/>
</dbReference>
<dbReference type="FunFam" id="2.10.25.160:FF:000002">
    <property type="entry name" value="Cysteine protease 1"/>
    <property type="match status" value="1"/>
</dbReference>
<dbReference type="FunFam" id="3.90.70.10:FF:000068">
    <property type="entry name" value="Cysteine protease 1"/>
    <property type="match status" value="1"/>
</dbReference>
<dbReference type="Gene3D" id="3.90.70.10">
    <property type="entry name" value="Cysteine proteinases"/>
    <property type="match status" value="1"/>
</dbReference>
<dbReference type="Gene3D" id="2.10.25.160">
    <property type="entry name" value="Granulin"/>
    <property type="match status" value="1"/>
</dbReference>
<dbReference type="InterPro" id="IPR000118">
    <property type="entry name" value="Granulin"/>
</dbReference>
<dbReference type="InterPro" id="IPR037277">
    <property type="entry name" value="Granulin_sf"/>
</dbReference>
<dbReference type="InterPro" id="IPR038765">
    <property type="entry name" value="Papain-like_cys_pep_sf"/>
</dbReference>
<dbReference type="InterPro" id="IPR025661">
    <property type="entry name" value="Pept_asp_AS"/>
</dbReference>
<dbReference type="InterPro" id="IPR000169">
    <property type="entry name" value="Pept_cys_AS"/>
</dbReference>
<dbReference type="InterPro" id="IPR025660">
    <property type="entry name" value="Pept_his_AS"/>
</dbReference>
<dbReference type="InterPro" id="IPR013128">
    <property type="entry name" value="Peptidase_C1A"/>
</dbReference>
<dbReference type="InterPro" id="IPR000668">
    <property type="entry name" value="Peptidase_C1A_C"/>
</dbReference>
<dbReference type="InterPro" id="IPR039417">
    <property type="entry name" value="Peptidase_C1A_papain-like"/>
</dbReference>
<dbReference type="InterPro" id="IPR013201">
    <property type="entry name" value="Prot_inhib_I29"/>
</dbReference>
<dbReference type="PANTHER" id="PTHR12411">
    <property type="entry name" value="CYSTEINE PROTEASE FAMILY C1-RELATED"/>
    <property type="match status" value="1"/>
</dbReference>
<dbReference type="Pfam" id="PF00396">
    <property type="entry name" value="Granulin"/>
    <property type="match status" value="1"/>
</dbReference>
<dbReference type="Pfam" id="PF08246">
    <property type="entry name" value="Inhibitor_I29"/>
    <property type="match status" value="1"/>
</dbReference>
<dbReference type="Pfam" id="PF00112">
    <property type="entry name" value="Peptidase_C1"/>
    <property type="match status" value="1"/>
</dbReference>
<dbReference type="PRINTS" id="PR00705">
    <property type="entry name" value="PAPAIN"/>
</dbReference>
<dbReference type="SMART" id="SM00277">
    <property type="entry name" value="GRAN"/>
    <property type="match status" value="1"/>
</dbReference>
<dbReference type="SMART" id="SM00848">
    <property type="entry name" value="Inhibitor_I29"/>
    <property type="match status" value="1"/>
</dbReference>
<dbReference type="SMART" id="SM00645">
    <property type="entry name" value="Pept_C1"/>
    <property type="match status" value="1"/>
</dbReference>
<dbReference type="SUPFAM" id="SSF54001">
    <property type="entry name" value="Cysteine proteinases"/>
    <property type="match status" value="1"/>
</dbReference>
<dbReference type="SUPFAM" id="SSF57277">
    <property type="entry name" value="Granulin repeat"/>
    <property type="match status" value="1"/>
</dbReference>
<dbReference type="PROSITE" id="PS00640">
    <property type="entry name" value="THIOL_PROTEASE_ASN"/>
    <property type="match status" value="1"/>
</dbReference>
<dbReference type="PROSITE" id="PS00139">
    <property type="entry name" value="THIOL_PROTEASE_CYS"/>
    <property type="match status" value="1"/>
</dbReference>
<dbReference type="PROSITE" id="PS00639">
    <property type="entry name" value="THIOL_PROTEASE_HIS"/>
    <property type="match status" value="1"/>
</dbReference>
<evidence type="ECO:0000250" key="1">
    <source>
        <dbReference type="UniProtKB" id="P00785"/>
    </source>
</evidence>
<evidence type="ECO:0000250" key="2">
    <source>
        <dbReference type="UniProtKB" id="P43297"/>
    </source>
</evidence>
<evidence type="ECO:0000250" key="3">
    <source>
        <dbReference type="UniProtKB" id="P80884"/>
    </source>
</evidence>
<evidence type="ECO:0000250" key="4">
    <source>
        <dbReference type="UniProtKB" id="P84346"/>
    </source>
</evidence>
<evidence type="ECO:0000255" key="5"/>
<evidence type="ECO:0000255" key="6">
    <source>
        <dbReference type="PROSITE-ProRule" id="PRU00498"/>
    </source>
</evidence>
<evidence type="ECO:0000255" key="7">
    <source>
        <dbReference type="PROSITE-ProRule" id="PRU10088"/>
    </source>
</evidence>
<evidence type="ECO:0000255" key="8">
    <source>
        <dbReference type="PROSITE-ProRule" id="PRU10089"/>
    </source>
</evidence>
<evidence type="ECO:0000255" key="9">
    <source>
        <dbReference type="PROSITE-ProRule" id="PRU10090"/>
    </source>
</evidence>
<evidence type="ECO:0000256" key="10">
    <source>
        <dbReference type="SAM" id="MobiDB-lite"/>
    </source>
</evidence>
<evidence type="ECO:0000269" key="11">
    <source>
    </source>
</evidence>
<evidence type="ECO:0000269" key="12">
    <source>
    </source>
</evidence>
<evidence type="ECO:0000305" key="13"/>
<evidence type="ECO:0007744" key="14">
    <source>
        <dbReference type="PDB" id="1FWO"/>
    </source>
</evidence>
<evidence type="ECO:0007829" key="15">
    <source>
        <dbReference type="PDB" id="1FWO"/>
    </source>
</evidence>
<keyword id="KW-0002">3D-structure</keyword>
<keyword id="KW-1015">Disulfide bond</keyword>
<keyword id="KW-0325">Glycoprotein</keyword>
<keyword id="KW-0378">Hydrolase</keyword>
<keyword id="KW-0645">Protease</keyword>
<keyword id="KW-1185">Reference proteome</keyword>
<keyword id="KW-0732">Signal</keyword>
<keyword id="KW-0788">Thiol protease</keyword>
<keyword id="KW-0865">Zymogen</keyword>
<reference key="1">
    <citation type="journal article" date="1991" name="J. Biol. Chem.">
        <title>Molecular cloning and gibberellin-induced expression of multiple cysteine proteinases of rice seeds (oryzains).</title>
        <authorList>
            <person name="Watanabe H."/>
            <person name="Abe K."/>
            <person name="Emori Y."/>
            <person name="Hosoyama H."/>
            <person name="Arai S."/>
        </authorList>
    </citation>
    <scope>NUCLEOTIDE SEQUENCE [MRNA]</scope>
    <scope>TISSUE SPECIFICITY</scope>
    <scope>INDUCTION BY GIBBERELLIN</scope>
    <source>
        <strain>cv. Nipponbare</strain>
        <tissue>Seed</tissue>
    </source>
</reference>
<reference key="2">
    <citation type="journal article" date="2002" name="Nature">
        <title>Sequence and analysis of rice chromosome 4.</title>
        <authorList>
            <person name="Feng Q."/>
            <person name="Zhang Y."/>
            <person name="Hao P."/>
            <person name="Wang S."/>
            <person name="Fu G."/>
            <person name="Huang Y."/>
            <person name="Li Y."/>
            <person name="Zhu J."/>
            <person name="Liu Y."/>
            <person name="Hu X."/>
            <person name="Jia P."/>
            <person name="Zhang Y."/>
            <person name="Zhao Q."/>
            <person name="Ying K."/>
            <person name="Yu S."/>
            <person name="Tang Y."/>
            <person name="Weng Q."/>
            <person name="Zhang L."/>
            <person name="Lu Y."/>
            <person name="Mu J."/>
            <person name="Lu Y."/>
            <person name="Zhang L.S."/>
            <person name="Yu Z."/>
            <person name="Fan D."/>
            <person name="Liu X."/>
            <person name="Lu T."/>
            <person name="Li C."/>
            <person name="Wu Y."/>
            <person name="Sun T."/>
            <person name="Lei H."/>
            <person name="Li T."/>
            <person name="Hu H."/>
            <person name="Guan J."/>
            <person name="Wu M."/>
            <person name="Zhang R."/>
            <person name="Zhou B."/>
            <person name="Chen Z."/>
            <person name="Chen L."/>
            <person name="Jin Z."/>
            <person name="Wang R."/>
            <person name="Yin H."/>
            <person name="Cai Z."/>
            <person name="Ren S."/>
            <person name="Lv G."/>
            <person name="Gu W."/>
            <person name="Zhu G."/>
            <person name="Tu Y."/>
            <person name="Jia J."/>
            <person name="Zhang Y."/>
            <person name="Chen J."/>
            <person name="Kang H."/>
            <person name="Chen X."/>
            <person name="Shao C."/>
            <person name="Sun Y."/>
            <person name="Hu Q."/>
            <person name="Zhang X."/>
            <person name="Zhang W."/>
            <person name="Wang L."/>
            <person name="Ding C."/>
            <person name="Sheng H."/>
            <person name="Gu J."/>
            <person name="Chen S."/>
            <person name="Ni L."/>
            <person name="Zhu F."/>
            <person name="Chen W."/>
            <person name="Lan L."/>
            <person name="Lai Y."/>
            <person name="Cheng Z."/>
            <person name="Gu M."/>
            <person name="Jiang J."/>
            <person name="Li J."/>
            <person name="Hong G."/>
            <person name="Xue Y."/>
            <person name="Han B."/>
        </authorList>
    </citation>
    <scope>NUCLEOTIDE SEQUENCE [LARGE SCALE GENOMIC DNA]</scope>
    <source>
        <strain>cv. Nipponbare</strain>
    </source>
</reference>
<reference key="3">
    <citation type="journal article" date="2005" name="Nature">
        <title>The map-based sequence of the rice genome.</title>
        <authorList>
            <consortium name="International rice genome sequencing project (IRGSP)"/>
        </authorList>
    </citation>
    <scope>NUCLEOTIDE SEQUENCE [LARGE SCALE GENOMIC DNA]</scope>
    <source>
        <strain>cv. Nipponbare</strain>
    </source>
</reference>
<reference key="4">
    <citation type="journal article" date="2008" name="Nucleic Acids Res.">
        <title>The rice annotation project database (RAP-DB): 2008 update.</title>
        <authorList>
            <consortium name="The rice annotation project (RAP)"/>
        </authorList>
    </citation>
    <scope>GENOME REANNOTATION</scope>
    <source>
        <strain>cv. Nipponbare</strain>
    </source>
</reference>
<reference key="5">
    <citation type="journal article" date="2013" name="Rice">
        <title>Improvement of the Oryza sativa Nipponbare reference genome using next generation sequence and optical map data.</title>
        <authorList>
            <person name="Kawahara Y."/>
            <person name="de la Bastide M."/>
            <person name="Hamilton J.P."/>
            <person name="Kanamori H."/>
            <person name="McCombie W.R."/>
            <person name="Ouyang S."/>
            <person name="Schwartz D.C."/>
            <person name="Tanaka T."/>
            <person name="Wu J."/>
            <person name="Zhou S."/>
            <person name="Childs K.L."/>
            <person name="Davidson R.M."/>
            <person name="Lin H."/>
            <person name="Quesada-Ocampo L."/>
            <person name="Vaillancourt B."/>
            <person name="Sakai H."/>
            <person name="Lee S.S."/>
            <person name="Kim J."/>
            <person name="Numa H."/>
            <person name="Itoh T."/>
            <person name="Buell C.R."/>
            <person name="Matsumoto T."/>
        </authorList>
    </citation>
    <scope>GENOME REANNOTATION</scope>
    <source>
        <strain>cv. Nipponbare</strain>
    </source>
</reference>
<reference key="6">
    <citation type="journal article" date="2003" name="Science">
        <title>Collection, mapping, and annotation of over 28,000 cDNA clones from japonica rice.</title>
        <authorList>
            <consortium name="The rice full-length cDNA consortium"/>
        </authorList>
    </citation>
    <scope>NUCLEOTIDE SEQUENCE [LARGE SCALE MRNA]</scope>
    <source>
        <strain>cv. Nipponbare</strain>
    </source>
</reference>
<reference key="7">
    <citation type="submission" date="2001-03" db="EMBL/GenBank/DDBJ databases">
        <title>Molecular cloning of salt responsive gene in rice, OSSRIII.</title>
        <authorList>
            <person name="Pillai A."/>
            <person name="Seiji Y."/>
        </authorList>
    </citation>
    <scope>NUCLEOTIDE SEQUENCE [MRNA] OF 344-465</scope>
</reference>
<reference key="8">
    <citation type="journal article" date="2001" name="J. Pept. Res.">
        <title>A peptide derived from the C-terminal part of a plant cysteine protease folds into a stack of two beta-hairpins, a scaffold present in the emerging family of granulin-like growth factors.</title>
        <authorList>
            <person name="Tolkatchev D."/>
            <person name="Xu P."/>
            <person name="Ni F."/>
        </authorList>
    </citation>
    <scope>STRUCTURE BY NMR OF 383-417</scope>
    <scope>DISULFIDE BONDS</scope>
</reference>